<reference key="1">
    <citation type="journal article" date="2001" name="Nature">
        <title>Complete genome sequence of Salmonella enterica serovar Typhimurium LT2.</title>
        <authorList>
            <person name="McClelland M."/>
            <person name="Sanderson K.E."/>
            <person name="Spieth J."/>
            <person name="Clifton S.W."/>
            <person name="Latreille P."/>
            <person name="Courtney L."/>
            <person name="Porwollik S."/>
            <person name="Ali J."/>
            <person name="Dante M."/>
            <person name="Du F."/>
            <person name="Hou S."/>
            <person name="Layman D."/>
            <person name="Leonard S."/>
            <person name="Nguyen C."/>
            <person name="Scott K."/>
            <person name="Holmes A."/>
            <person name="Grewal N."/>
            <person name="Mulvaney E."/>
            <person name="Ryan E."/>
            <person name="Sun H."/>
            <person name="Florea L."/>
            <person name="Miller W."/>
            <person name="Stoneking T."/>
            <person name="Nhan M."/>
            <person name="Waterston R."/>
            <person name="Wilson R.K."/>
        </authorList>
    </citation>
    <scope>NUCLEOTIDE SEQUENCE [LARGE SCALE GENOMIC DNA]</scope>
    <source>
        <strain>LT2 / SGSC1412 / ATCC 700720</strain>
    </source>
</reference>
<reference key="2">
    <citation type="journal article" date="2003" name="J. Bacteriol.">
        <title>Salmonella enterica serovar typhimurium rdoA is growth phase regulated and involved in relaying Cpx-induced signals.</title>
        <authorList>
            <person name="Suntharalingam P."/>
            <person name="Spencer H."/>
            <person name="Gallant C.V."/>
            <person name="Martin N.L."/>
        </authorList>
    </citation>
    <scope>FUNCTION</scope>
    <scope>INDUCTION</scope>
    <source>
        <strain>SL1344</strain>
    </source>
</reference>
<reference key="3">
    <citation type="journal article" date="2007" name="Mol. Microbiol.">
        <title>Crystal structure of a novel prokaryotic Ser/Thr kinase and its implication in the Cpx stress response pathway.</title>
        <authorList>
            <person name="Zheng J."/>
            <person name="He C."/>
            <person name="Singh V.K."/>
            <person name="Martin N.L."/>
            <person name="Jia Z."/>
        </authorList>
    </citation>
    <scope>FUNCTION</scope>
    <scope>CATALYTIC ACTIVITY</scope>
    <scope>SUBCELLULAR LOCATION</scope>
    <scope>INDUCTION</scope>
    <scope>DISRUPTION PHENOTYPE</scope>
    <source>
        <strain>SL1344</strain>
    </source>
</reference>
<name>RDOA_SALTY</name>
<evidence type="ECO:0000255" key="1">
    <source>
        <dbReference type="HAMAP-Rule" id="MF_01497"/>
    </source>
</evidence>
<evidence type="ECO:0000269" key="2">
    <source>
    </source>
</evidence>
<evidence type="ECO:0000269" key="3">
    <source>
    </source>
</evidence>
<evidence type="ECO:0000303" key="4">
    <source>
    </source>
</evidence>
<evidence type="ECO:0000303" key="5">
    <source>
    </source>
</evidence>
<evidence type="ECO:0000305" key="6"/>
<evidence type="ECO:0000305" key="7">
    <source>
    </source>
</evidence>
<organism>
    <name type="scientific">Salmonella typhimurium (strain LT2 / SGSC1412 / ATCC 700720)</name>
    <dbReference type="NCBI Taxonomy" id="99287"/>
    <lineage>
        <taxon>Bacteria</taxon>
        <taxon>Pseudomonadati</taxon>
        <taxon>Pseudomonadota</taxon>
        <taxon>Gammaproteobacteria</taxon>
        <taxon>Enterobacterales</taxon>
        <taxon>Enterobacteriaceae</taxon>
        <taxon>Salmonella</taxon>
    </lineage>
</organism>
<protein>
    <recommendedName>
        <fullName evidence="5">Serine/threonine protein kinase RdoA</fullName>
        <ecNumber evidence="1 3">2.7.11.1</ecNumber>
    </recommendedName>
    <alternativeName>
        <fullName evidence="1">Serine/threonine-protein kinase SrkA</fullName>
    </alternativeName>
    <alternativeName>
        <fullName evidence="1">Stress response kinase A</fullName>
    </alternativeName>
</protein>
<dbReference type="EC" id="2.7.11.1" evidence="1 3"/>
<dbReference type="EMBL" id="AE006468">
    <property type="protein sequence ID" value="AAL22835.1"/>
    <property type="molecule type" value="Genomic_DNA"/>
</dbReference>
<dbReference type="RefSeq" id="WP_000999249.1">
    <property type="nucleotide sequence ID" value="NC_003197.2"/>
</dbReference>
<dbReference type="SMR" id="Q8ZKU8"/>
<dbReference type="STRING" id="99287.STM3996"/>
<dbReference type="PaxDb" id="99287-STM3996"/>
<dbReference type="KEGG" id="stm:STM3996"/>
<dbReference type="PATRIC" id="fig|99287.12.peg.4210"/>
<dbReference type="HOGENOM" id="CLU_054715_0_0_6"/>
<dbReference type="OMA" id="MHYSAWL"/>
<dbReference type="PhylomeDB" id="Q8ZKU8"/>
<dbReference type="BioCyc" id="SENT99287:STM3996-MONOMER"/>
<dbReference type="Proteomes" id="UP000001014">
    <property type="component" value="Chromosome"/>
</dbReference>
<dbReference type="GO" id="GO:0005737">
    <property type="term" value="C:cytoplasm"/>
    <property type="evidence" value="ECO:0000318"/>
    <property type="project" value="GO_Central"/>
</dbReference>
<dbReference type="GO" id="GO:0005524">
    <property type="term" value="F:ATP binding"/>
    <property type="evidence" value="ECO:0007669"/>
    <property type="project" value="UniProtKB-UniRule"/>
</dbReference>
<dbReference type="GO" id="GO:0000287">
    <property type="term" value="F:magnesium ion binding"/>
    <property type="evidence" value="ECO:0007669"/>
    <property type="project" value="UniProtKB-UniRule"/>
</dbReference>
<dbReference type="GO" id="GO:0106310">
    <property type="term" value="F:protein serine kinase activity"/>
    <property type="evidence" value="ECO:0007669"/>
    <property type="project" value="RHEA"/>
</dbReference>
<dbReference type="GO" id="GO:0004674">
    <property type="term" value="F:protein serine/threonine kinase activity"/>
    <property type="evidence" value="ECO:0000318"/>
    <property type="project" value="GO_Central"/>
</dbReference>
<dbReference type="Gene3D" id="1.20.1270.170">
    <property type="match status" value="1"/>
</dbReference>
<dbReference type="Gene3D" id="3.30.200.70">
    <property type="match status" value="1"/>
</dbReference>
<dbReference type="Gene3D" id="1.10.510.10">
    <property type="entry name" value="Transferase(Phosphotransferase) domain 1"/>
    <property type="match status" value="1"/>
</dbReference>
<dbReference type="HAMAP" id="MF_01497">
    <property type="entry name" value="SrkA_kinase"/>
    <property type="match status" value="1"/>
</dbReference>
<dbReference type="InterPro" id="IPR002575">
    <property type="entry name" value="Aminoglycoside_PTrfase"/>
</dbReference>
<dbReference type="InterPro" id="IPR011009">
    <property type="entry name" value="Kinase-like_dom_sf"/>
</dbReference>
<dbReference type="InterPro" id="IPR032882">
    <property type="entry name" value="SrkA/RdoA"/>
</dbReference>
<dbReference type="NCBIfam" id="NF008738">
    <property type="entry name" value="PRK11768.1"/>
    <property type="match status" value="1"/>
</dbReference>
<dbReference type="PANTHER" id="PTHR39573">
    <property type="entry name" value="STRESS RESPONSE KINASE A"/>
    <property type="match status" value="1"/>
</dbReference>
<dbReference type="PANTHER" id="PTHR39573:SF1">
    <property type="entry name" value="STRESS RESPONSE KINASE A"/>
    <property type="match status" value="1"/>
</dbReference>
<dbReference type="Pfam" id="PF01636">
    <property type="entry name" value="APH"/>
    <property type="match status" value="1"/>
</dbReference>
<dbReference type="SUPFAM" id="SSF56112">
    <property type="entry name" value="Protein kinase-like (PK-like)"/>
    <property type="match status" value="1"/>
</dbReference>
<gene>
    <name evidence="4" type="primary">rdoA</name>
    <name evidence="6" type="synonym">srkA</name>
    <name type="ordered locus">STM3996</name>
</gene>
<feature type="chain" id="PRO_0000209580" description="Serine/threonine protein kinase RdoA">
    <location>
        <begin position="1"/>
        <end position="328"/>
    </location>
</feature>
<feature type="active site" description="Proton acceptor" evidence="1">
    <location>
        <position position="201"/>
    </location>
</feature>
<feature type="active site" evidence="1">
    <location>
        <position position="217"/>
    </location>
</feature>
<feature type="binding site" evidence="1">
    <location>
        <position position="206"/>
    </location>
    <ligand>
        <name>Mg(2+)</name>
        <dbReference type="ChEBI" id="CHEBI:18420"/>
    </ligand>
</feature>
<feature type="binding site" evidence="1">
    <location>
        <position position="217"/>
    </location>
    <ligand>
        <name>Mg(2+)</name>
        <dbReference type="ChEBI" id="CHEBI:18420"/>
    </ligand>
</feature>
<feature type="site" description="ATP" evidence="1">
    <location>
        <position position="36"/>
    </location>
</feature>
<sequence>MNDNAFTFQTLHPETIMDALFEQGIMVDSGLTPLNSYENRVYQFQDEDRRRFVVKFYRPERWSVDQIREEHQFALELVKDEVPVAAPLAFNGQTLLAHQGYHYAIFPSVGGRQFEADNIDQMEAVGRYLGRLHQTGRKRPFTFRPDIGLAEYLFEPRQVFEDAALIPSGQKAAFLKATDTLLSAVTECWRTDFATLRLHGDCHAGNILWRDGPLFVDLDDARNGPAIQDLWMLLNGDKAEQRMQLETIIEAYEEVSEFDTAEIGLIEPLRAMRLVYYLAWLIRRWGDPAFPKNFPWLTGEDYWQRQTTTFIEQTKILHEPPLQLTPMY</sequence>
<keyword id="KW-0067">ATP-binding</keyword>
<keyword id="KW-0963">Cytoplasm</keyword>
<keyword id="KW-0418">Kinase</keyword>
<keyword id="KW-0460">Magnesium</keyword>
<keyword id="KW-0479">Metal-binding</keyword>
<keyword id="KW-0547">Nucleotide-binding</keyword>
<keyword id="KW-0597">Phosphoprotein</keyword>
<keyword id="KW-1185">Reference proteome</keyword>
<keyword id="KW-0723">Serine/threonine-protein kinase</keyword>
<keyword id="KW-0346">Stress response</keyword>
<keyword id="KW-0808">Transferase</keyword>
<accession>Q8ZKU8</accession>
<proteinExistence type="evidence at protein level"/>
<comment type="function">
    <text evidence="1 2">A protein kinase that (auto)phosphorylates on Ser and Thr residues, probably involved in the extracytoplasmic stress response (PubMed:12511488). Probably acts to suppress the effects of stress linked to accumulation of reactive oxygen species (By similarity).</text>
</comment>
<comment type="catalytic activity">
    <reaction evidence="1 3">
        <text>L-seryl-[protein] + ATP = O-phospho-L-seryl-[protein] + ADP + H(+)</text>
        <dbReference type="Rhea" id="RHEA:17989"/>
        <dbReference type="Rhea" id="RHEA-COMP:9863"/>
        <dbReference type="Rhea" id="RHEA-COMP:11604"/>
        <dbReference type="ChEBI" id="CHEBI:15378"/>
        <dbReference type="ChEBI" id="CHEBI:29999"/>
        <dbReference type="ChEBI" id="CHEBI:30616"/>
        <dbReference type="ChEBI" id="CHEBI:83421"/>
        <dbReference type="ChEBI" id="CHEBI:456216"/>
        <dbReference type="EC" id="2.7.11.1"/>
    </reaction>
</comment>
<comment type="catalytic activity">
    <reaction evidence="1 3">
        <text>L-threonyl-[protein] + ATP = O-phospho-L-threonyl-[protein] + ADP + H(+)</text>
        <dbReference type="Rhea" id="RHEA:46608"/>
        <dbReference type="Rhea" id="RHEA-COMP:11060"/>
        <dbReference type="Rhea" id="RHEA-COMP:11605"/>
        <dbReference type="ChEBI" id="CHEBI:15378"/>
        <dbReference type="ChEBI" id="CHEBI:30013"/>
        <dbReference type="ChEBI" id="CHEBI:30616"/>
        <dbReference type="ChEBI" id="CHEBI:61977"/>
        <dbReference type="ChEBI" id="CHEBI:456216"/>
        <dbReference type="EC" id="2.7.11.1"/>
    </reaction>
</comment>
<comment type="cofactor">
    <cofactor evidence="1">
        <name>Mg(2+)</name>
        <dbReference type="ChEBI" id="CHEBI:18420"/>
    </cofactor>
</comment>
<comment type="subunit">
    <text evidence="1">Monomer.</text>
</comment>
<comment type="subcellular location">
    <subcellularLocation>
        <location evidence="1 7">Cytoplasm</location>
    </subcellularLocation>
</comment>
<comment type="induction">
    <text evidence="2 3">Expression is growth phase dependent and sensitive to the media conditions reaching high levels in stationary phase (at protein level) (PubMed:17302814). It is probably regulated by the CpxRA two-component regulatory system (PubMed:12511488).</text>
</comment>
<comment type="disruption phenotype">
    <text evidence="3">Decreases long-term survival (1000-fold decrease after 20 days in liquid culture), derepresses curli production under non-curli-inducing growth conditions.</text>
</comment>
<comment type="similarity">
    <text evidence="1">Belongs to the SrkA/RdoA protein kinase family.</text>
</comment>